<keyword id="KW-0378">Hydrolase</keyword>
<keyword id="KW-0464">Manganese</keyword>
<keyword id="KW-0479">Metal-binding</keyword>
<keyword id="KW-0620">Polyamine biosynthesis</keyword>
<keyword id="KW-0661">Putrescine biosynthesis</keyword>
<keyword id="KW-0745">Spermidine biosynthesis</keyword>
<gene>
    <name evidence="1" type="primary">speB</name>
    <name type="ordered locus">SEN2921</name>
</gene>
<accession>B5QXK5</accession>
<sequence length="306" mass="33576">MSTLGHQYDNSLVSNAFGFLRLPMNFQPYDSDADWVITGVPFDMATSGRAGGRHGPAAIRQVSTNLAWEHHRFPWSFDMRERLNVVDCGDLVYAFGDAREMSEKLQAHAEKLLSAGKRMLSFGGDHFVTLPLLRAHAKHFGKMALVHFDAHTDTYANGCEFDHGTMFYTAPKEGLIDPHHSVQIGIRTEFDKDNGFTVLDACQVNDRGVDDILAQVKQIVGDMPVYLTFDIDCLDPAFAPGTGTPVIGGLTSDRAIKLVRGLKDLNIVGMDVVEVAPAYDQSEITALAAATLALEMLYIQAAKKGE</sequence>
<organism>
    <name type="scientific">Salmonella enteritidis PT4 (strain P125109)</name>
    <dbReference type="NCBI Taxonomy" id="550537"/>
    <lineage>
        <taxon>Bacteria</taxon>
        <taxon>Pseudomonadati</taxon>
        <taxon>Pseudomonadota</taxon>
        <taxon>Gammaproteobacteria</taxon>
        <taxon>Enterobacterales</taxon>
        <taxon>Enterobacteriaceae</taxon>
        <taxon>Salmonella</taxon>
    </lineage>
</organism>
<comment type="function">
    <text evidence="1">Catalyzes the formation of putrescine from agmatine.</text>
</comment>
<comment type="catalytic activity">
    <reaction evidence="1">
        <text>agmatine + H2O = urea + putrescine</text>
        <dbReference type="Rhea" id="RHEA:13929"/>
        <dbReference type="ChEBI" id="CHEBI:15377"/>
        <dbReference type="ChEBI" id="CHEBI:16199"/>
        <dbReference type="ChEBI" id="CHEBI:58145"/>
        <dbReference type="ChEBI" id="CHEBI:326268"/>
        <dbReference type="EC" id="3.5.3.11"/>
    </reaction>
</comment>
<comment type="cofactor">
    <cofactor evidence="1">
        <name>Mn(2+)</name>
        <dbReference type="ChEBI" id="CHEBI:29035"/>
    </cofactor>
</comment>
<comment type="pathway">
    <text evidence="1">Amine and polyamine biosynthesis; putrescine biosynthesis via agmatine pathway; putrescine from agmatine: step 1/1.</text>
</comment>
<comment type="similarity">
    <text evidence="1">Belongs to the arginase family. Agmatinase subfamily.</text>
</comment>
<name>SPEB_SALEP</name>
<feature type="chain" id="PRO_1000145621" description="Agmatinase">
    <location>
        <begin position="1"/>
        <end position="306"/>
    </location>
</feature>
<feature type="binding site" evidence="1">
    <location>
        <position position="126"/>
    </location>
    <ligand>
        <name>Mn(2+)</name>
        <dbReference type="ChEBI" id="CHEBI:29035"/>
    </ligand>
</feature>
<feature type="binding site" evidence="1">
    <location>
        <position position="149"/>
    </location>
    <ligand>
        <name>Mn(2+)</name>
        <dbReference type="ChEBI" id="CHEBI:29035"/>
    </ligand>
</feature>
<feature type="binding site" evidence="1">
    <location>
        <position position="151"/>
    </location>
    <ligand>
        <name>Mn(2+)</name>
        <dbReference type="ChEBI" id="CHEBI:29035"/>
    </ligand>
</feature>
<feature type="binding site" evidence="1">
    <location>
        <position position="153"/>
    </location>
    <ligand>
        <name>Mn(2+)</name>
        <dbReference type="ChEBI" id="CHEBI:29035"/>
    </ligand>
</feature>
<feature type="binding site" evidence="1">
    <location>
        <position position="230"/>
    </location>
    <ligand>
        <name>Mn(2+)</name>
        <dbReference type="ChEBI" id="CHEBI:29035"/>
    </ligand>
</feature>
<feature type="binding site" evidence="1">
    <location>
        <position position="232"/>
    </location>
    <ligand>
        <name>Mn(2+)</name>
        <dbReference type="ChEBI" id="CHEBI:29035"/>
    </ligand>
</feature>
<reference key="1">
    <citation type="journal article" date="2008" name="Genome Res.">
        <title>Comparative genome analysis of Salmonella enteritidis PT4 and Salmonella gallinarum 287/91 provides insights into evolutionary and host adaptation pathways.</title>
        <authorList>
            <person name="Thomson N.R."/>
            <person name="Clayton D.J."/>
            <person name="Windhorst D."/>
            <person name="Vernikos G."/>
            <person name="Davidson S."/>
            <person name="Churcher C."/>
            <person name="Quail M.A."/>
            <person name="Stevens M."/>
            <person name="Jones M.A."/>
            <person name="Watson M."/>
            <person name="Barron A."/>
            <person name="Layton A."/>
            <person name="Pickard D."/>
            <person name="Kingsley R.A."/>
            <person name="Bignell A."/>
            <person name="Clark L."/>
            <person name="Harris B."/>
            <person name="Ormond D."/>
            <person name="Abdellah Z."/>
            <person name="Brooks K."/>
            <person name="Cherevach I."/>
            <person name="Chillingworth T."/>
            <person name="Woodward J."/>
            <person name="Norberczak H."/>
            <person name="Lord A."/>
            <person name="Arrowsmith C."/>
            <person name="Jagels K."/>
            <person name="Moule S."/>
            <person name="Mungall K."/>
            <person name="Saunders M."/>
            <person name="Whitehead S."/>
            <person name="Chabalgoity J.A."/>
            <person name="Maskell D."/>
            <person name="Humphreys T."/>
            <person name="Roberts M."/>
            <person name="Barrow P.A."/>
            <person name="Dougan G."/>
            <person name="Parkhill J."/>
        </authorList>
    </citation>
    <scope>NUCLEOTIDE SEQUENCE [LARGE SCALE GENOMIC DNA]</scope>
    <source>
        <strain>P125109</strain>
    </source>
</reference>
<evidence type="ECO:0000255" key="1">
    <source>
        <dbReference type="HAMAP-Rule" id="MF_01418"/>
    </source>
</evidence>
<dbReference type="EC" id="3.5.3.11" evidence="1"/>
<dbReference type="EMBL" id="AM933172">
    <property type="protein sequence ID" value="CAR34499.1"/>
    <property type="molecule type" value="Genomic_DNA"/>
</dbReference>
<dbReference type="RefSeq" id="WP_000105553.1">
    <property type="nucleotide sequence ID" value="NC_011294.1"/>
</dbReference>
<dbReference type="SMR" id="B5QXK5"/>
<dbReference type="KEGG" id="set:SEN2921"/>
<dbReference type="HOGENOM" id="CLU_039478_0_0_6"/>
<dbReference type="UniPathway" id="UPA00534">
    <property type="reaction ID" value="UER00287"/>
</dbReference>
<dbReference type="Proteomes" id="UP000000613">
    <property type="component" value="Chromosome"/>
</dbReference>
<dbReference type="GO" id="GO:0008783">
    <property type="term" value="F:agmatinase activity"/>
    <property type="evidence" value="ECO:0007669"/>
    <property type="project" value="UniProtKB-UniRule"/>
</dbReference>
<dbReference type="GO" id="GO:0030145">
    <property type="term" value="F:manganese ion binding"/>
    <property type="evidence" value="ECO:0007669"/>
    <property type="project" value="InterPro"/>
</dbReference>
<dbReference type="GO" id="GO:0033389">
    <property type="term" value="P:putrescine biosynthetic process from arginine, via agmatine"/>
    <property type="evidence" value="ECO:0007669"/>
    <property type="project" value="TreeGrafter"/>
</dbReference>
<dbReference type="GO" id="GO:0008295">
    <property type="term" value="P:spermidine biosynthetic process"/>
    <property type="evidence" value="ECO:0007669"/>
    <property type="project" value="UniProtKB-UniRule"/>
</dbReference>
<dbReference type="CDD" id="cd11592">
    <property type="entry name" value="Agmatinase_PAH"/>
    <property type="match status" value="1"/>
</dbReference>
<dbReference type="FunFam" id="3.40.800.10:FF:000001">
    <property type="entry name" value="Agmatinase"/>
    <property type="match status" value="1"/>
</dbReference>
<dbReference type="Gene3D" id="3.40.800.10">
    <property type="entry name" value="Ureohydrolase domain"/>
    <property type="match status" value="1"/>
</dbReference>
<dbReference type="HAMAP" id="MF_01418">
    <property type="entry name" value="SpeB"/>
    <property type="match status" value="1"/>
</dbReference>
<dbReference type="InterPro" id="IPR023694">
    <property type="entry name" value="Agmatinase"/>
</dbReference>
<dbReference type="InterPro" id="IPR005925">
    <property type="entry name" value="Agmatinase-rel"/>
</dbReference>
<dbReference type="InterPro" id="IPR006035">
    <property type="entry name" value="Ureohydrolase"/>
</dbReference>
<dbReference type="InterPro" id="IPR023696">
    <property type="entry name" value="Ureohydrolase_dom_sf"/>
</dbReference>
<dbReference type="InterPro" id="IPR020855">
    <property type="entry name" value="Ureohydrolase_Mn_BS"/>
</dbReference>
<dbReference type="NCBIfam" id="TIGR01230">
    <property type="entry name" value="agmatinase"/>
    <property type="match status" value="1"/>
</dbReference>
<dbReference type="NCBIfam" id="NF002564">
    <property type="entry name" value="PRK02190.1"/>
    <property type="match status" value="1"/>
</dbReference>
<dbReference type="PANTHER" id="PTHR11358">
    <property type="entry name" value="ARGINASE/AGMATINASE"/>
    <property type="match status" value="1"/>
</dbReference>
<dbReference type="PANTHER" id="PTHR11358:SF26">
    <property type="entry name" value="GUANIDINO ACID HYDROLASE, MITOCHONDRIAL"/>
    <property type="match status" value="1"/>
</dbReference>
<dbReference type="Pfam" id="PF00491">
    <property type="entry name" value="Arginase"/>
    <property type="match status" value="1"/>
</dbReference>
<dbReference type="PIRSF" id="PIRSF036979">
    <property type="entry name" value="Arginase"/>
    <property type="match status" value="1"/>
</dbReference>
<dbReference type="SUPFAM" id="SSF52768">
    <property type="entry name" value="Arginase/deacetylase"/>
    <property type="match status" value="1"/>
</dbReference>
<dbReference type="PROSITE" id="PS01053">
    <property type="entry name" value="ARGINASE_1"/>
    <property type="match status" value="1"/>
</dbReference>
<dbReference type="PROSITE" id="PS51409">
    <property type="entry name" value="ARGINASE_2"/>
    <property type="match status" value="1"/>
</dbReference>
<proteinExistence type="inferred from homology"/>
<protein>
    <recommendedName>
        <fullName evidence="1">Agmatinase</fullName>
        <ecNumber evidence="1">3.5.3.11</ecNumber>
    </recommendedName>
    <alternativeName>
        <fullName evidence="1">Agmatine ureohydrolase</fullName>
        <shortName evidence="1">AUH</shortName>
    </alternativeName>
</protein>